<name>3609L_ASFP4</name>
<protein>
    <recommendedName>
        <fullName>Protein MGF 360-9L</fullName>
    </recommendedName>
</protein>
<feature type="chain" id="PRO_0000373270" description="Protein MGF 360-9L">
    <location>
        <begin position="1"/>
        <end position="352"/>
    </location>
</feature>
<keyword id="KW-0244">Early protein</keyword>
<keyword id="KW-1035">Host cytoplasm</keyword>
<gene>
    <name type="ordered locus">Pret-031</name>
</gene>
<organismHost>
    <name type="scientific">Ornithodoros</name>
    <name type="common">relapsing fever ticks</name>
    <dbReference type="NCBI Taxonomy" id="6937"/>
</organismHost>
<organismHost>
    <name type="scientific">Phacochoerus aethiopicus</name>
    <name type="common">Warthog</name>
    <dbReference type="NCBI Taxonomy" id="85517"/>
</organismHost>
<organismHost>
    <name type="scientific">Phacochoerus africanus</name>
    <name type="common">Warthog</name>
    <dbReference type="NCBI Taxonomy" id="41426"/>
</organismHost>
<organismHost>
    <name type="scientific">Potamochoerus larvatus</name>
    <name type="common">Bushpig</name>
    <dbReference type="NCBI Taxonomy" id="273792"/>
</organismHost>
<organismHost>
    <name type="scientific">Sus scrofa</name>
    <name type="common">Pig</name>
    <dbReference type="NCBI Taxonomy" id="9823"/>
</organismHost>
<reference key="1">
    <citation type="submission" date="2003-03" db="EMBL/GenBank/DDBJ databases">
        <title>African swine fever virus genomes.</title>
        <authorList>
            <person name="Kutish G.F."/>
            <person name="Rock D.L."/>
        </authorList>
    </citation>
    <scope>NUCLEOTIDE SEQUENCE [LARGE SCALE GENOMIC DNA]</scope>
</reference>
<proteinExistence type="inferred from homology"/>
<evidence type="ECO:0000250" key="1">
    <source>
        <dbReference type="UniProtKB" id="Q65137"/>
    </source>
</evidence>
<evidence type="ECO:0000305" key="2"/>
<organism>
    <name type="scientific">African swine fever virus (isolate Tick/South Africa/Pretoriuskop Pr4/1996)</name>
    <name type="common">ASFV</name>
    <dbReference type="NCBI Taxonomy" id="561443"/>
    <lineage>
        <taxon>Viruses</taxon>
        <taxon>Varidnaviria</taxon>
        <taxon>Bamfordvirae</taxon>
        <taxon>Nucleocytoviricota</taxon>
        <taxon>Pokkesviricetes</taxon>
        <taxon>Asfuvirales</taxon>
        <taxon>Asfarviridae</taxon>
        <taxon>Asfivirus</taxon>
        <taxon>African swine fever virus</taxon>
    </lineage>
</organism>
<sequence length="352" mass="41424">MVLSLQTLAKKVLAGQRPTKCHPHFLKCYGLWWHNGPMIFDQNQKKIWSPIFTDGVHINAALVKAAAENNYDLIKLFTEWGANIDYSLLSVNTERTRDLCRELGAKEQLKQEEVLYYFNTIKRNLTSSNIILCHEVFSHNPILETINRTKLRGIIYEQLEALMENTDILSELLTKYWYGIAIEFNLTKAIHYFYQRYVHLHQWRLMYALFYNNVCDLHELYAKEKIRMDMDEMLKWACRKNYNYLTIYYCCIVLGADINQAMFHSIQFYNIGNMFFCIDLGANAIEEGKTLALQKDKSFIASLLSINCYSMNDSLSLKETDPEVIKRMLKDYHSKNMSIAHKYYIKHGFNDI</sequence>
<dbReference type="EMBL" id="AY261363">
    <property type="status" value="NOT_ANNOTATED_CDS"/>
    <property type="molecule type" value="Genomic_DNA"/>
</dbReference>
<dbReference type="SMR" id="P0C9P2"/>
<dbReference type="Proteomes" id="UP000000859">
    <property type="component" value="Segment"/>
</dbReference>
<dbReference type="GO" id="GO:0030430">
    <property type="term" value="C:host cell cytoplasm"/>
    <property type="evidence" value="ECO:0007669"/>
    <property type="project" value="UniProtKB-SubCell"/>
</dbReference>
<dbReference type="GO" id="GO:0042330">
    <property type="term" value="P:taxis"/>
    <property type="evidence" value="ECO:0007669"/>
    <property type="project" value="InterPro"/>
</dbReference>
<dbReference type="InterPro" id="IPR002595">
    <property type="entry name" value="ASFV_MGF360"/>
</dbReference>
<dbReference type="Pfam" id="PF01671">
    <property type="entry name" value="ASFV_360"/>
    <property type="match status" value="1"/>
</dbReference>
<accession>P0C9P2</accession>
<comment type="function">
    <text evidence="1">Plays a role in virus cell tropism, and may be required for efficient virus replication in macrophages. In addition, inhibits IFN-beta-induced IFN-stimulated genes (ISGs) transcription. Mechanistically, degrades host STAT1 and STAT2 through apoptosis and ubiquitin-proteasome pathways respectively.</text>
</comment>
<comment type="subunit">
    <text evidence="1">Interacts with host STAT1; this interaction mediates STAT1 degradation through apoptosis. Interacts with host STAT2; this interaction mediates STAT2 degradation through the proteasome.</text>
</comment>
<comment type="subcellular location">
    <subcellularLocation>
        <location evidence="1">Host cytoplasm</location>
    </subcellularLocation>
</comment>
<comment type="induction">
    <text evidence="2">Expressed in the early phase of the viral replicative cycle.</text>
</comment>
<comment type="similarity">
    <text evidence="2">Belongs to the asfivirus MGF 360 family.</text>
</comment>